<accession>P29133</accession>
<organism>
    <name type="scientific">Acidithiobacillus ferrooxidans</name>
    <name type="common">Thiobacillus ferrooxidans</name>
    <dbReference type="NCBI Taxonomy" id="920"/>
    <lineage>
        <taxon>Bacteria</taxon>
        <taxon>Pseudomonadati</taxon>
        <taxon>Pseudomonadota</taxon>
        <taxon>Acidithiobacillia</taxon>
        <taxon>Acidithiobacillales</taxon>
        <taxon>Acidithiobacillaceae</taxon>
        <taxon>Acidithiobacillus</taxon>
    </lineage>
</organism>
<evidence type="ECO:0000250" key="1"/>
<evidence type="ECO:0000269" key="2">
    <source>
    </source>
</evidence>
<evidence type="ECO:0000305" key="3"/>
<dbReference type="GO" id="GO:0005524">
    <property type="term" value="F:ATP binding"/>
    <property type="evidence" value="ECO:0007669"/>
    <property type="project" value="UniProtKB-KW"/>
</dbReference>
<dbReference type="GO" id="GO:0140662">
    <property type="term" value="F:ATP-dependent protein folding chaperone"/>
    <property type="evidence" value="ECO:0007669"/>
    <property type="project" value="InterPro"/>
</dbReference>
<dbReference type="Gene3D" id="3.30.420.40">
    <property type="match status" value="1"/>
</dbReference>
<dbReference type="InterPro" id="IPR043129">
    <property type="entry name" value="ATPase_NBD"/>
</dbReference>
<dbReference type="InterPro" id="IPR018181">
    <property type="entry name" value="Heat_shock_70_CS"/>
</dbReference>
<dbReference type="InterPro" id="IPR013126">
    <property type="entry name" value="Hsp_70_fam"/>
</dbReference>
<dbReference type="Pfam" id="PF00012">
    <property type="entry name" value="HSP70"/>
    <property type="match status" value="1"/>
</dbReference>
<dbReference type="SUPFAM" id="SSF53067">
    <property type="entry name" value="Actin-like ATPase domain"/>
    <property type="match status" value="1"/>
</dbReference>
<dbReference type="PROSITE" id="PS00297">
    <property type="entry name" value="HSP70_1"/>
    <property type="match status" value="1"/>
</dbReference>
<reference key="1">
    <citation type="journal article" date="1992" name="FEMS Microbiol. Lett.">
        <title>Identification and characterization of GroEL and DnaK homologues in Thiobacillus ferrooxidans.</title>
        <authorList>
            <person name="Varela P."/>
            <person name="Jerez C.A."/>
        </authorList>
    </citation>
    <scope>PROTEIN SEQUENCE</scope>
    <source>
        <strain>ATCC 19859 / BCRC 13033 / JCM 3863 / NCIMB 9490</strain>
    </source>
</reference>
<reference key="2">
    <citation type="journal article" date="1996" name="FEMS Microbiol. Lett.">
        <title>Phosphorylation of GroEL, DnaK and other proteins from Thiobacillus ferrooxidans grown under different conditions.</title>
        <authorList>
            <person name="Seeger M."/>
            <person name="Osorio G."/>
            <person name="Jerez C.A."/>
        </authorList>
    </citation>
    <scope>PHOSPHORYLATION</scope>
</reference>
<proteinExistence type="evidence at protein level"/>
<comment type="function">
    <text evidence="1">Acts as a chaperone.</text>
</comment>
<comment type="induction">
    <text evidence="1">By stress conditions e.g. heat shock (By similarity).</text>
</comment>
<comment type="PTM">
    <text evidence="2">Autophosphorylated.</text>
</comment>
<comment type="similarity">
    <text evidence="3">Belongs to the heat shock protein 70 family.</text>
</comment>
<keyword id="KW-0067">ATP-binding</keyword>
<keyword id="KW-0143">Chaperone</keyword>
<keyword id="KW-0903">Direct protein sequencing</keyword>
<keyword id="KW-0547">Nucleotide-binding</keyword>
<keyword id="KW-0597">Phosphoprotein</keyword>
<keyword id="KW-0346">Stress response</keyword>
<name>DNAK_ACIFR</name>
<gene>
    <name type="primary">dnaK</name>
</gene>
<sequence>AKVIGIDLGTTNSXVAVMEG</sequence>
<protein>
    <recommendedName>
        <fullName>Chaperone protein DnaK</fullName>
    </recommendedName>
    <alternativeName>
        <fullName>HSP70</fullName>
    </alternativeName>
    <alternativeName>
        <fullName>Heat shock 70 kDa protein</fullName>
    </alternativeName>
    <alternativeName>
        <fullName>Heat shock protein 70</fullName>
    </alternativeName>
</protein>
<feature type="chain" id="PRO_0000078576" description="Chaperone protein DnaK">
    <location>
        <begin position="1"/>
        <end position="20" status="greater than"/>
    </location>
</feature>
<feature type="non-terminal residue">
    <location>
        <position position="20"/>
    </location>
</feature>